<accession>Q9DA21</accession>
<comment type="subcellular location">
    <subcellularLocation>
        <location evidence="3">Membrane</location>
        <topology evidence="3">Single-pass membrane protein</topology>
    </subcellularLocation>
</comment>
<organism>
    <name type="scientific">Mus musculus</name>
    <name type="common">Mouse</name>
    <dbReference type="NCBI Taxonomy" id="10090"/>
    <lineage>
        <taxon>Eukaryota</taxon>
        <taxon>Metazoa</taxon>
        <taxon>Chordata</taxon>
        <taxon>Craniata</taxon>
        <taxon>Vertebrata</taxon>
        <taxon>Euteleostomi</taxon>
        <taxon>Mammalia</taxon>
        <taxon>Eutheria</taxon>
        <taxon>Euarchontoglires</taxon>
        <taxon>Glires</taxon>
        <taxon>Rodentia</taxon>
        <taxon>Myomorpha</taxon>
        <taxon>Muroidea</taxon>
        <taxon>Muridae</taxon>
        <taxon>Murinae</taxon>
        <taxon>Mus</taxon>
        <taxon>Mus</taxon>
    </lineage>
</organism>
<dbReference type="EMBL" id="AK006257">
    <property type="protein sequence ID" value="BAB24486.1"/>
    <property type="molecule type" value="mRNA"/>
</dbReference>
<dbReference type="CCDS" id="CCDS51955.1"/>
<dbReference type="RefSeq" id="NP_081335.1">
    <property type="nucleotide sequence ID" value="NM_027059.1"/>
</dbReference>
<dbReference type="SMR" id="Q9DA21"/>
<dbReference type="STRING" id="10090.ENSMUSP00000032433"/>
<dbReference type="GlyGen" id="Q9DA21">
    <property type="glycosylation" value="1 site"/>
</dbReference>
<dbReference type="iPTMnet" id="Q9DA21"/>
<dbReference type="PhosphoSitePlus" id="Q9DA21"/>
<dbReference type="SwissPalm" id="Q9DA21"/>
<dbReference type="PaxDb" id="10090-ENSMUSP00000107261"/>
<dbReference type="ProteomicsDB" id="261526"/>
<dbReference type="Antibodypedia" id="2577">
    <property type="antibodies" value="15 antibodies from 8 providers"/>
</dbReference>
<dbReference type="Ensembl" id="ENSMUST00000032433.9">
    <property type="protein sequence ID" value="ENSMUSP00000032433.4"/>
    <property type="gene ID" value="ENSMUSG00000030292.11"/>
</dbReference>
<dbReference type="GeneID" id="69371"/>
<dbReference type="KEGG" id="mmu:69371"/>
<dbReference type="UCSC" id="uc009esl.1">
    <property type="organism name" value="mouse"/>
</dbReference>
<dbReference type="AGR" id="MGI:1916621"/>
<dbReference type="CTD" id="341346"/>
<dbReference type="MGI" id="MGI:1916621">
    <property type="gene designation" value="Smco2"/>
</dbReference>
<dbReference type="VEuPathDB" id="HostDB:ENSMUSG00000030292"/>
<dbReference type="eggNOG" id="ENOG502RNQM">
    <property type="taxonomic scope" value="Eukaryota"/>
</dbReference>
<dbReference type="GeneTree" id="ENSGT00940000153380"/>
<dbReference type="InParanoid" id="Q9DA21"/>
<dbReference type="OMA" id="GADHIGW"/>
<dbReference type="OrthoDB" id="9835655at2759"/>
<dbReference type="PhylomeDB" id="Q9DA21"/>
<dbReference type="BioGRID-ORCS" id="69371">
    <property type="hits" value="0 hits in 79 CRISPR screens"/>
</dbReference>
<dbReference type="ChiTaRS" id="Smco2">
    <property type="organism name" value="mouse"/>
</dbReference>
<dbReference type="PRO" id="PR:Q9DA21"/>
<dbReference type="Proteomes" id="UP000000589">
    <property type="component" value="Chromosome 6"/>
</dbReference>
<dbReference type="RNAct" id="Q9DA21">
    <property type="molecule type" value="protein"/>
</dbReference>
<dbReference type="Bgee" id="ENSMUSG00000030292">
    <property type="expression patterns" value="Expressed in spermatocyte and 26 other cell types or tissues"/>
</dbReference>
<dbReference type="GO" id="GO:0016020">
    <property type="term" value="C:membrane"/>
    <property type="evidence" value="ECO:0007669"/>
    <property type="project" value="UniProtKB-SubCell"/>
</dbReference>
<dbReference type="InterPro" id="IPR026617">
    <property type="entry name" value="SMCO2/5"/>
</dbReference>
<dbReference type="PANTHER" id="PTHR22422:SF5">
    <property type="entry name" value="SINGLE-PASS MEMBRANE AND COILED-COIL DOMAIN-CONTAINING PROTEIN 2"/>
    <property type="match status" value="1"/>
</dbReference>
<dbReference type="PANTHER" id="PTHR22422">
    <property type="entry name" value="TRANSMEMBRANE AND COILED-COIL DOMAIN-CONTAINING PROTEIN 5B-RELATED"/>
    <property type="match status" value="1"/>
</dbReference>
<dbReference type="Pfam" id="PF14992">
    <property type="entry name" value="TMCO5"/>
    <property type="match status" value="1"/>
</dbReference>
<feature type="chain" id="PRO_0000340701" description="Single-pass membrane and coiled-coil domain-containing protein 2">
    <location>
        <begin position="1"/>
        <end position="347"/>
    </location>
</feature>
<feature type="transmembrane region" description="Helical" evidence="1">
    <location>
        <begin position="288"/>
        <end position="308"/>
    </location>
</feature>
<feature type="region of interest" description="Disordered" evidence="2">
    <location>
        <begin position="1"/>
        <end position="89"/>
    </location>
</feature>
<feature type="region of interest" description="Disordered" evidence="2">
    <location>
        <begin position="243"/>
        <end position="274"/>
    </location>
</feature>
<feature type="coiled-coil region" evidence="1">
    <location>
        <begin position="139"/>
        <end position="238"/>
    </location>
</feature>
<feature type="compositionally biased region" description="Basic and acidic residues" evidence="2">
    <location>
        <begin position="10"/>
        <end position="21"/>
    </location>
</feature>
<feature type="compositionally biased region" description="Basic and acidic residues" evidence="2">
    <location>
        <begin position="36"/>
        <end position="51"/>
    </location>
</feature>
<feature type="compositionally biased region" description="Basic and acidic residues" evidence="2">
    <location>
        <begin position="60"/>
        <end position="86"/>
    </location>
</feature>
<feature type="compositionally biased region" description="Acidic residues" evidence="2">
    <location>
        <begin position="253"/>
        <end position="262"/>
    </location>
</feature>
<feature type="compositionally biased region" description="Low complexity" evidence="2">
    <location>
        <begin position="263"/>
        <end position="273"/>
    </location>
</feature>
<feature type="modified residue" description="Phosphoserine" evidence="4">
    <location>
        <position position="178"/>
    </location>
</feature>
<keyword id="KW-0175">Coiled coil</keyword>
<keyword id="KW-0472">Membrane</keyword>
<keyword id="KW-0597">Phosphoprotein</keyword>
<keyword id="KW-1185">Reference proteome</keyword>
<keyword id="KW-0812">Transmembrane</keyword>
<keyword id="KW-1133">Transmembrane helix</keyword>
<name>SMCO2_MOUSE</name>
<proteinExistence type="evidence at protein level"/>
<gene>
    <name type="primary">Smco2</name>
</gene>
<protein>
    <recommendedName>
        <fullName>Single-pass membrane and coiled-coil domain-containing protein 2</fullName>
    </recommendedName>
</protein>
<reference key="1">
    <citation type="journal article" date="2005" name="Science">
        <title>The transcriptional landscape of the mammalian genome.</title>
        <authorList>
            <person name="Carninci P."/>
            <person name="Kasukawa T."/>
            <person name="Katayama S."/>
            <person name="Gough J."/>
            <person name="Frith M.C."/>
            <person name="Maeda N."/>
            <person name="Oyama R."/>
            <person name="Ravasi T."/>
            <person name="Lenhard B."/>
            <person name="Wells C."/>
            <person name="Kodzius R."/>
            <person name="Shimokawa K."/>
            <person name="Bajic V.B."/>
            <person name="Brenner S.E."/>
            <person name="Batalov S."/>
            <person name="Forrest A.R."/>
            <person name="Zavolan M."/>
            <person name="Davis M.J."/>
            <person name="Wilming L.G."/>
            <person name="Aidinis V."/>
            <person name="Allen J.E."/>
            <person name="Ambesi-Impiombato A."/>
            <person name="Apweiler R."/>
            <person name="Aturaliya R.N."/>
            <person name="Bailey T.L."/>
            <person name="Bansal M."/>
            <person name="Baxter L."/>
            <person name="Beisel K.W."/>
            <person name="Bersano T."/>
            <person name="Bono H."/>
            <person name="Chalk A.M."/>
            <person name="Chiu K.P."/>
            <person name="Choudhary V."/>
            <person name="Christoffels A."/>
            <person name="Clutterbuck D.R."/>
            <person name="Crowe M.L."/>
            <person name="Dalla E."/>
            <person name="Dalrymple B.P."/>
            <person name="de Bono B."/>
            <person name="Della Gatta G."/>
            <person name="di Bernardo D."/>
            <person name="Down T."/>
            <person name="Engstrom P."/>
            <person name="Fagiolini M."/>
            <person name="Faulkner G."/>
            <person name="Fletcher C.F."/>
            <person name="Fukushima T."/>
            <person name="Furuno M."/>
            <person name="Futaki S."/>
            <person name="Gariboldi M."/>
            <person name="Georgii-Hemming P."/>
            <person name="Gingeras T.R."/>
            <person name="Gojobori T."/>
            <person name="Green R.E."/>
            <person name="Gustincich S."/>
            <person name="Harbers M."/>
            <person name="Hayashi Y."/>
            <person name="Hensch T.K."/>
            <person name="Hirokawa N."/>
            <person name="Hill D."/>
            <person name="Huminiecki L."/>
            <person name="Iacono M."/>
            <person name="Ikeo K."/>
            <person name="Iwama A."/>
            <person name="Ishikawa T."/>
            <person name="Jakt M."/>
            <person name="Kanapin A."/>
            <person name="Katoh M."/>
            <person name="Kawasawa Y."/>
            <person name="Kelso J."/>
            <person name="Kitamura H."/>
            <person name="Kitano H."/>
            <person name="Kollias G."/>
            <person name="Krishnan S.P."/>
            <person name="Kruger A."/>
            <person name="Kummerfeld S.K."/>
            <person name="Kurochkin I.V."/>
            <person name="Lareau L.F."/>
            <person name="Lazarevic D."/>
            <person name="Lipovich L."/>
            <person name="Liu J."/>
            <person name="Liuni S."/>
            <person name="McWilliam S."/>
            <person name="Madan Babu M."/>
            <person name="Madera M."/>
            <person name="Marchionni L."/>
            <person name="Matsuda H."/>
            <person name="Matsuzawa S."/>
            <person name="Miki H."/>
            <person name="Mignone F."/>
            <person name="Miyake S."/>
            <person name="Morris K."/>
            <person name="Mottagui-Tabar S."/>
            <person name="Mulder N."/>
            <person name="Nakano N."/>
            <person name="Nakauchi H."/>
            <person name="Ng P."/>
            <person name="Nilsson R."/>
            <person name="Nishiguchi S."/>
            <person name="Nishikawa S."/>
            <person name="Nori F."/>
            <person name="Ohara O."/>
            <person name="Okazaki Y."/>
            <person name="Orlando V."/>
            <person name="Pang K.C."/>
            <person name="Pavan W.J."/>
            <person name="Pavesi G."/>
            <person name="Pesole G."/>
            <person name="Petrovsky N."/>
            <person name="Piazza S."/>
            <person name="Reed J."/>
            <person name="Reid J.F."/>
            <person name="Ring B.Z."/>
            <person name="Ringwald M."/>
            <person name="Rost B."/>
            <person name="Ruan Y."/>
            <person name="Salzberg S.L."/>
            <person name="Sandelin A."/>
            <person name="Schneider C."/>
            <person name="Schoenbach C."/>
            <person name="Sekiguchi K."/>
            <person name="Semple C.A."/>
            <person name="Seno S."/>
            <person name="Sessa L."/>
            <person name="Sheng Y."/>
            <person name="Shibata Y."/>
            <person name="Shimada H."/>
            <person name="Shimada K."/>
            <person name="Silva D."/>
            <person name="Sinclair B."/>
            <person name="Sperling S."/>
            <person name="Stupka E."/>
            <person name="Sugiura K."/>
            <person name="Sultana R."/>
            <person name="Takenaka Y."/>
            <person name="Taki K."/>
            <person name="Tammoja K."/>
            <person name="Tan S.L."/>
            <person name="Tang S."/>
            <person name="Taylor M.S."/>
            <person name="Tegner J."/>
            <person name="Teichmann S.A."/>
            <person name="Ueda H.R."/>
            <person name="van Nimwegen E."/>
            <person name="Verardo R."/>
            <person name="Wei C.L."/>
            <person name="Yagi K."/>
            <person name="Yamanishi H."/>
            <person name="Zabarovsky E."/>
            <person name="Zhu S."/>
            <person name="Zimmer A."/>
            <person name="Hide W."/>
            <person name="Bult C."/>
            <person name="Grimmond S.M."/>
            <person name="Teasdale R.D."/>
            <person name="Liu E.T."/>
            <person name="Brusic V."/>
            <person name="Quackenbush J."/>
            <person name="Wahlestedt C."/>
            <person name="Mattick J.S."/>
            <person name="Hume D.A."/>
            <person name="Kai C."/>
            <person name="Sasaki D."/>
            <person name="Tomaru Y."/>
            <person name="Fukuda S."/>
            <person name="Kanamori-Katayama M."/>
            <person name="Suzuki M."/>
            <person name="Aoki J."/>
            <person name="Arakawa T."/>
            <person name="Iida J."/>
            <person name="Imamura K."/>
            <person name="Itoh M."/>
            <person name="Kato T."/>
            <person name="Kawaji H."/>
            <person name="Kawagashira N."/>
            <person name="Kawashima T."/>
            <person name="Kojima M."/>
            <person name="Kondo S."/>
            <person name="Konno H."/>
            <person name="Nakano K."/>
            <person name="Ninomiya N."/>
            <person name="Nishio T."/>
            <person name="Okada M."/>
            <person name="Plessy C."/>
            <person name="Shibata K."/>
            <person name="Shiraki T."/>
            <person name="Suzuki S."/>
            <person name="Tagami M."/>
            <person name="Waki K."/>
            <person name="Watahiki A."/>
            <person name="Okamura-Oho Y."/>
            <person name="Suzuki H."/>
            <person name="Kawai J."/>
            <person name="Hayashizaki Y."/>
        </authorList>
    </citation>
    <scope>NUCLEOTIDE SEQUENCE [LARGE SCALE MRNA]</scope>
    <source>
        <strain>C57BL/6J</strain>
        <tissue>Testis</tissue>
    </source>
</reference>
<reference key="2">
    <citation type="journal article" date="2010" name="Cell">
        <title>A tissue-specific atlas of mouse protein phosphorylation and expression.</title>
        <authorList>
            <person name="Huttlin E.L."/>
            <person name="Jedrychowski M.P."/>
            <person name="Elias J.E."/>
            <person name="Goswami T."/>
            <person name="Rad R."/>
            <person name="Beausoleil S.A."/>
            <person name="Villen J."/>
            <person name="Haas W."/>
            <person name="Sowa M.E."/>
            <person name="Gygi S.P."/>
        </authorList>
    </citation>
    <scope>PHOSPHORYLATION [LARGE SCALE ANALYSIS] AT SER-178</scope>
    <scope>IDENTIFICATION BY MASS SPECTROMETRY [LARGE SCALE ANALYSIS]</scope>
    <source>
        <tissue>Testis</tissue>
    </source>
</reference>
<evidence type="ECO:0000255" key="1"/>
<evidence type="ECO:0000256" key="2">
    <source>
        <dbReference type="SAM" id="MobiDB-lite"/>
    </source>
</evidence>
<evidence type="ECO:0000305" key="3"/>
<evidence type="ECO:0007744" key="4">
    <source>
    </source>
</evidence>
<sequence length="347" mass="39357">MMSLQLGTAGKERQLAEKSRDLQNVSMTEGSEEVSEMDHISDRPDEKDKPSENLQTDSLYKMDTEKWDGLEQESEHSQDPPSKPDEQEVTLVCEGPQVSQLSPSTDESTPIPESLTHKLNYWHAKMGLQMKELGADHGDWLERINNIIQNINNTESTVKSLLTEVISLENQSKNLEDSDQEADIEEKITEIRRQLKEVNIKLTQVDACEEARELKEKLVEQIESFHKEMNVLNSKLEMYYTQGSDADSHNSEDVDTEQEEPLVPEASPSLSASPTPPCSAVWKNALKLFVIVYVVTITGLSCYILFVDATFLFERVLPSVLGHRTMWDLREMMAPFLNLEAEDLLPS</sequence>